<dbReference type="EMBL" id="CP001337">
    <property type="protein sequence ID" value="ACL23902.1"/>
    <property type="molecule type" value="Genomic_DNA"/>
</dbReference>
<dbReference type="RefSeq" id="WP_012616268.1">
    <property type="nucleotide sequence ID" value="NC_011831.1"/>
</dbReference>
<dbReference type="SMR" id="B8G6G5"/>
<dbReference type="STRING" id="326427.Cagg_0984"/>
<dbReference type="KEGG" id="cag:Cagg_0984"/>
<dbReference type="eggNOG" id="COG0355">
    <property type="taxonomic scope" value="Bacteria"/>
</dbReference>
<dbReference type="HOGENOM" id="CLU_084338_1_3_0"/>
<dbReference type="OrthoDB" id="9804110at2"/>
<dbReference type="Proteomes" id="UP000002508">
    <property type="component" value="Chromosome"/>
</dbReference>
<dbReference type="GO" id="GO:0005886">
    <property type="term" value="C:plasma membrane"/>
    <property type="evidence" value="ECO:0007669"/>
    <property type="project" value="UniProtKB-SubCell"/>
</dbReference>
<dbReference type="GO" id="GO:0045259">
    <property type="term" value="C:proton-transporting ATP synthase complex"/>
    <property type="evidence" value="ECO:0007669"/>
    <property type="project" value="UniProtKB-KW"/>
</dbReference>
<dbReference type="GO" id="GO:0005524">
    <property type="term" value="F:ATP binding"/>
    <property type="evidence" value="ECO:0007669"/>
    <property type="project" value="UniProtKB-UniRule"/>
</dbReference>
<dbReference type="GO" id="GO:0046933">
    <property type="term" value="F:proton-transporting ATP synthase activity, rotational mechanism"/>
    <property type="evidence" value="ECO:0007669"/>
    <property type="project" value="UniProtKB-UniRule"/>
</dbReference>
<dbReference type="CDD" id="cd12152">
    <property type="entry name" value="F1-ATPase_delta"/>
    <property type="match status" value="1"/>
</dbReference>
<dbReference type="FunFam" id="2.60.15.10:FF:000019">
    <property type="entry name" value="ATP synthase epsilon chain"/>
    <property type="match status" value="1"/>
</dbReference>
<dbReference type="Gene3D" id="2.60.15.10">
    <property type="entry name" value="F0F1 ATP synthase delta/epsilon subunit, N-terminal"/>
    <property type="match status" value="1"/>
</dbReference>
<dbReference type="HAMAP" id="MF_00530">
    <property type="entry name" value="ATP_synth_epsil_bac"/>
    <property type="match status" value="1"/>
</dbReference>
<dbReference type="InterPro" id="IPR036794">
    <property type="entry name" value="ATP_F1_dsu/esu_C_sf"/>
</dbReference>
<dbReference type="InterPro" id="IPR001469">
    <property type="entry name" value="ATP_synth_F1_dsu/esu"/>
</dbReference>
<dbReference type="InterPro" id="IPR020546">
    <property type="entry name" value="ATP_synth_F1_dsu/esu_N"/>
</dbReference>
<dbReference type="InterPro" id="IPR020547">
    <property type="entry name" value="ATP_synth_F1_esu_C"/>
</dbReference>
<dbReference type="InterPro" id="IPR036771">
    <property type="entry name" value="ATPsynth_dsu/esu_N"/>
</dbReference>
<dbReference type="NCBIfam" id="TIGR01216">
    <property type="entry name" value="ATP_synt_epsi"/>
    <property type="match status" value="1"/>
</dbReference>
<dbReference type="NCBIfam" id="NF009980">
    <property type="entry name" value="PRK13446.1"/>
    <property type="match status" value="1"/>
</dbReference>
<dbReference type="NCBIfam" id="NF011322">
    <property type="entry name" value="PRK14735.1"/>
    <property type="match status" value="1"/>
</dbReference>
<dbReference type="PANTHER" id="PTHR13822">
    <property type="entry name" value="ATP SYNTHASE DELTA/EPSILON CHAIN"/>
    <property type="match status" value="1"/>
</dbReference>
<dbReference type="PANTHER" id="PTHR13822:SF10">
    <property type="entry name" value="ATP SYNTHASE EPSILON CHAIN, CHLOROPLASTIC"/>
    <property type="match status" value="1"/>
</dbReference>
<dbReference type="Pfam" id="PF00401">
    <property type="entry name" value="ATP-synt_DE"/>
    <property type="match status" value="1"/>
</dbReference>
<dbReference type="Pfam" id="PF02823">
    <property type="entry name" value="ATP-synt_DE_N"/>
    <property type="match status" value="1"/>
</dbReference>
<dbReference type="SUPFAM" id="SSF46604">
    <property type="entry name" value="Epsilon subunit of F1F0-ATP synthase C-terminal domain"/>
    <property type="match status" value="1"/>
</dbReference>
<dbReference type="SUPFAM" id="SSF51344">
    <property type="entry name" value="Epsilon subunit of F1F0-ATP synthase N-terminal domain"/>
    <property type="match status" value="1"/>
</dbReference>
<name>ATPE_CHLAD</name>
<keyword id="KW-0066">ATP synthesis</keyword>
<keyword id="KW-1003">Cell membrane</keyword>
<keyword id="KW-0139">CF(1)</keyword>
<keyword id="KW-0375">Hydrogen ion transport</keyword>
<keyword id="KW-0406">Ion transport</keyword>
<keyword id="KW-0472">Membrane</keyword>
<keyword id="KW-0813">Transport</keyword>
<organism>
    <name type="scientific">Chloroflexus aggregans (strain MD-66 / DSM 9485)</name>
    <dbReference type="NCBI Taxonomy" id="326427"/>
    <lineage>
        <taxon>Bacteria</taxon>
        <taxon>Bacillati</taxon>
        <taxon>Chloroflexota</taxon>
        <taxon>Chloroflexia</taxon>
        <taxon>Chloroflexales</taxon>
        <taxon>Chloroflexineae</taxon>
        <taxon>Chloroflexaceae</taxon>
        <taxon>Chloroflexus</taxon>
    </lineage>
</organism>
<protein>
    <recommendedName>
        <fullName evidence="1">ATP synthase epsilon chain</fullName>
    </recommendedName>
    <alternativeName>
        <fullName evidence="1">ATP synthase F1 sector epsilon subunit</fullName>
    </alternativeName>
    <alternativeName>
        <fullName evidence="1">F-ATPase epsilon subunit</fullName>
    </alternativeName>
</protein>
<proteinExistence type="inferred from homology"/>
<accession>B8G6G5</accession>
<gene>
    <name evidence="1" type="primary">atpC</name>
    <name type="ordered locus">Cagg_0984</name>
</gene>
<sequence>MPIHLEIVTAERVILSDDVDMISVPTKDGRVGILPRHAPLMTILEPGELDIIKNGERTPFAVSGGFMEVLPHRVTILADTVERADEIDEARAEQARAEAEARRREAQSEHDMALAEAKLRKEMVRLRVAQLHKIKRRQS</sequence>
<feature type="chain" id="PRO_1000146317" description="ATP synthase epsilon chain">
    <location>
        <begin position="1"/>
        <end position="139"/>
    </location>
</feature>
<feature type="region of interest" description="Disordered" evidence="2">
    <location>
        <begin position="89"/>
        <end position="110"/>
    </location>
</feature>
<comment type="function">
    <text evidence="1">Produces ATP from ADP in the presence of a proton gradient across the membrane.</text>
</comment>
<comment type="subunit">
    <text evidence="1">F-type ATPases have 2 components, CF(1) - the catalytic core - and CF(0) - the membrane proton channel. CF(1) has five subunits: alpha(3), beta(3), gamma(1), delta(1), epsilon(1). CF(0) has three main subunits: a, b and c.</text>
</comment>
<comment type="subcellular location">
    <subcellularLocation>
        <location evidence="1">Cell membrane</location>
        <topology evidence="1">Peripheral membrane protein</topology>
    </subcellularLocation>
</comment>
<comment type="similarity">
    <text evidence="1">Belongs to the ATPase epsilon chain family.</text>
</comment>
<reference key="1">
    <citation type="submission" date="2008-12" db="EMBL/GenBank/DDBJ databases">
        <title>Complete sequence of Chloroflexus aggregans DSM 9485.</title>
        <authorList>
            <consortium name="US DOE Joint Genome Institute"/>
            <person name="Lucas S."/>
            <person name="Copeland A."/>
            <person name="Lapidus A."/>
            <person name="Glavina del Rio T."/>
            <person name="Dalin E."/>
            <person name="Tice H."/>
            <person name="Pitluck S."/>
            <person name="Foster B."/>
            <person name="Larimer F."/>
            <person name="Land M."/>
            <person name="Hauser L."/>
            <person name="Kyrpides N."/>
            <person name="Mikhailova N."/>
            <person name="Bryant D.A."/>
            <person name="Richardson P."/>
        </authorList>
    </citation>
    <scope>NUCLEOTIDE SEQUENCE [LARGE SCALE GENOMIC DNA]</scope>
    <source>
        <strain>MD-66 / DSM 9485</strain>
    </source>
</reference>
<evidence type="ECO:0000255" key="1">
    <source>
        <dbReference type="HAMAP-Rule" id="MF_00530"/>
    </source>
</evidence>
<evidence type="ECO:0000256" key="2">
    <source>
        <dbReference type="SAM" id="MobiDB-lite"/>
    </source>
</evidence>